<organism>
    <name type="scientific">Bacillus cereus (strain ZK / E33L)</name>
    <dbReference type="NCBI Taxonomy" id="288681"/>
    <lineage>
        <taxon>Bacteria</taxon>
        <taxon>Bacillati</taxon>
        <taxon>Bacillota</taxon>
        <taxon>Bacilli</taxon>
        <taxon>Bacillales</taxon>
        <taxon>Bacillaceae</taxon>
        <taxon>Bacillus</taxon>
        <taxon>Bacillus cereus group</taxon>
    </lineage>
</organism>
<comment type="function">
    <text evidence="1">Transfers an acetyl group from acetyl-CoA to L-homoserine, forming acetyl-L-homoserine.</text>
</comment>
<comment type="catalytic activity">
    <reaction evidence="1">
        <text>L-homoserine + acetyl-CoA = O-acetyl-L-homoserine + CoA</text>
        <dbReference type="Rhea" id="RHEA:13701"/>
        <dbReference type="ChEBI" id="CHEBI:57287"/>
        <dbReference type="ChEBI" id="CHEBI:57288"/>
        <dbReference type="ChEBI" id="CHEBI:57476"/>
        <dbReference type="ChEBI" id="CHEBI:57716"/>
        <dbReference type="EC" id="2.3.1.31"/>
    </reaction>
</comment>
<comment type="pathway">
    <text evidence="1">Amino-acid biosynthesis; L-methionine biosynthesis via de novo pathway; O-acetyl-L-homoserine from L-homoserine: step 1/1.</text>
</comment>
<comment type="subcellular location">
    <subcellularLocation>
        <location evidence="1">Cytoplasm</location>
    </subcellularLocation>
</comment>
<comment type="similarity">
    <text evidence="1">Belongs to the MetA family.</text>
</comment>
<proteinExistence type="inferred from homology"/>
<reference key="1">
    <citation type="journal article" date="2006" name="J. Bacteriol.">
        <title>Pathogenomic sequence analysis of Bacillus cereus and Bacillus thuringiensis isolates closely related to Bacillus anthracis.</title>
        <authorList>
            <person name="Han C.S."/>
            <person name="Xie G."/>
            <person name="Challacombe J.F."/>
            <person name="Altherr M.R."/>
            <person name="Bhotika S.S."/>
            <person name="Bruce D."/>
            <person name="Campbell C.S."/>
            <person name="Campbell M.L."/>
            <person name="Chen J."/>
            <person name="Chertkov O."/>
            <person name="Cleland C."/>
            <person name="Dimitrijevic M."/>
            <person name="Doggett N.A."/>
            <person name="Fawcett J.J."/>
            <person name="Glavina T."/>
            <person name="Goodwin L.A."/>
            <person name="Hill K.K."/>
            <person name="Hitchcock P."/>
            <person name="Jackson P.J."/>
            <person name="Keim P."/>
            <person name="Kewalramani A.R."/>
            <person name="Longmire J."/>
            <person name="Lucas S."/>
            <person name="Malfatti S."/>
            <person name="McMurry K."/>
            <person name="Meincke L.J."/>
            <person name="Misra M."/>
            <person name="Moseman B.L."/>
            <person name="Mundt M."/>
            <person name="Munk A.C."/>
            <person name="Okinaka R.T."/>
            <person name="Parson-Quintana B."/>
            <person name="Reilly L.P."/>
            <person name="Richardson P."/>
            <person name="Robinson D.L."/>
            <person name="Rubin E."/>
            <person name="Saunders E."/>
            <person name="Tapia R."/>
            <person name="Tesmer J.G."/>
            <person name="Thayer N."/>
            <person name="Thompson L.S."/>
            <person name="Tice H."/>
            <person name="Ticknor L.O."/>
            <person name="Wills P.L."/>
            <person name="Brettin T.S."/>
            <person name="Gilna P."/>
        </authorList>
    </citation>
    <scope>NUCLEOTIDE SEQUENCE [LARGE SCALE GENOMIC DNA]</scope>
    <source>
        <strain>ZK / E33L</strain>
    </source>
</reference>
<gene>
    <name evidence="1" type="primary">metAA</name>
    <name type="ordered locus">BCE33L5103</name>
</gene>
<dbReference type="EC" id="2.3.1.31" evidence="1"/>
<dbReference type="EMBL" id="CP000001">
    <property type="protein sequence ID" value="AAU20234.1"/>
    <property type="molecule type" value="Genomic_DNA"/>
</dbReference>
<dbReference type="RefSeq" id="WP_001121521.1">
    <property type="nucleotide sequence ID" value="NC_006274.1"/>
</dbReference>
<dbReference type="SMR" id="Q630J5"/>
<dbReference type="KEGG" id="bcz:BCE33L5103"/>
<dbReference type="PATRIC" id="fig|288681.22.peg.238"/>
<dbReference type="UniPathway" id="UPA00051">
    <property type="reaction ID" value="UER00074"/>
</dbReference>
<dbReference type="Proteomes" id="UP000002612">
    <property type="component" value="Chromosome"/>
</dbReference>
<dbReference type="GO" id="GO:0005737">
    <property type="term" value="C:cytoplasm"/>
    <property type="evidence" value="ECO:0007669"/>
    <property type="project" value="UniProtKB-SubCell"/>
</dbReference>
<dbReference type="GO" id="GO:0004414">
    <property type="term" value="F:homoserine O-acetyltransferase activity"/>
    <property type="evidence" value="ECO:0007669"/>
    <property type="project" value="UniProtKB-EC"/>
</dbReference>
<dbReference type="GO" id="GO:0008899">
    <property type="term" value="F:homoserine O-succinyltransferase activity"/>
    <property type="evidence" value="ECO:0007669"/>
    <property type="project" value="UniProtKB-UniRule"/>
</dbReference>
<dbReference type="GO" id="GO:0019281">
    <property type="term" value="P:L-methionine biosynthetic process from homoserine via O-succinyl-L-homoserine and cystathionine"/>
    <property type="evidence" value="ECO:0007669"/>
    <property type="project" value="InterPro"/>
</dbReference>
<dbReference type="CDD" id="cd03131">
    <property type="entry name" value="GATase1_HTS"/>
    <property type="match status" value="1"/>
</dbReference>
<dbReference type="FunFam" id="3.40.50.880:FF:000004">
    <property type="entry name" value="Homoserine O-succinyltransferase"/>
    <property type="match status" value="1"/>
</dbReference>
<dbReference type="Gene3D" id="3.40.50.880">
    <property type="match status" value="1"/>
</dbReference>
<dbReference type="HAMAP" id="MF_00295">
    <property type="entry name" value="MetA_acyltransf"/>
    <property type="match status" value="1"/>
</dbReference>
<dbReference type="InterPro" id="IPR029062">
    <property type="entry name" value="Class_I_gatase-like"/>
</dbReference>
<dbReference type="InterPro" id="IPR005697">
    <property type="entry name" value="HST_MetA"/>
</dbReference>
<dbReference type="InterPro" id="IPR033752">
    <property type="entry name" value="MetA_family"/>
</dbReference>
<dbReference type="NCBIfam" id="TIGR01001">
    <property type="entry name" value="metA"/>
    <property type="match status" value="1"/>
</dbReference>
<dbReference type="PANTHER" id="PTHR20919">
    <property type="entry name" value="HOMOSERINE O-SUCCINYLTRANSFERASE"/>
    <property type="match status" value="1"/>
</dbReference>
<dbReference type="PANTHER" id="PTHR20919:SF0">
    <property type="entry name" value="HOMOSERINE O-SUCCINYLTRANSFERASE"/>
    <property type="match status" value="1"/>
</dbReference>
<dbReference type="Pfam" id="PF04204">
    <property type="entry name" value="HTS"/>
    <property type="match status" value="1"/>
</dbReference>
<dbReference type="PIRSF" id="PIRSF000450">
    <property type="entry name" value="H_ser_succinyltr"/>
    <property type="match status" value="1"/>
</dbReference>
<dbReference type="SUPFAM" id="SSF52317">
    <property type="entry name" value="Class I glutamine amidotransferase-like"/>
    <property type="match status" value="1"/>
</dbReference>
<accession>Q630J5</accession>
<keyword id="KW-0012">Acyltransferase</keyword>
<keyword id="KW-0028">Amino-acid biosynthesis</keyword>
<keyword id="KW-0963">Cytoplasm</keyword>
<keyword id="KW-0486">Methionine biosynthesis</keyword>
<keyword id="KW-0808">Transferase</keyword>
<name>METAA_BACCZ</name>
<sequence>MPIIIDKDLPARKVLQEENIFVMTKERAETQDIRALKIAILNLMPTKQETEAQLLRLIGNTPLQLDVHLLHMESHLSRNVAQEHLTSFYKTFRDIENEKFDGLIITGAPVETLSFEEVDYWEELKRIMEYSKTNVTSTLHICWGAQAGLYHHYGVQKYPLKEKMFGVFEHEVREQHVKLLQGFDELFFAPHSRHTEVRENDIRGVKELTLLANSEEAGVHLVIGPEGRQVFALGHSEYSCDTLKQEYERDRQKGLNIDVPKNYFKHDNPNEKPLVRWRSHGNLLFSNWLNYYVYQETPYVL</sequence>
<protein>
    <recommendedName>
        <fullName evidence="1">Homoserine O-acetyltransferase</fullName>
        <shortName evidence="1">HAT</shortName>
        <ecNumber evidence="1">2.3.1.31</ecNumber>
    </recommendedName>
    <alternativeName>
        <fullName evidence="1">Homoserine transacetylase</fullName>
        <shortName evidence="1">HTA</shortName>
    </alternativeName>
</protein>
<feature type="chain" id="PRO_1000021798" description="Homoserine O-acetyltransferase">
    <location>
        <begin position="1"/>
        <end position="301"/>
    </location>
</feature>
<feature type="active site" description="Acyl-thioester intermediate" evidence="1">
    <location>
        <position position="142"/>
    </location>
</feature>
<feature type="active site" description="Proton acceptor" evidence="1">
    <location>
        <position position="235"/>
    </location>
</feature>
<feature type="active site" evidence="1">
    <location>
        <position position="237"/>
    </location>
</feature>
<feature type="binding site" evidence="1">
    <location>
        <position position="163"/>
    </location>
    <ligand>
        <name>substrate</name>
    </ligand>
</feature>
<feature type="binding site" evidence="1">
    <location>
        <position position="192"/>
    </location>
    <ligand>
        <name>substrate</name>
    </ligand>
</feature>
<feature type="binding site" evidence="1">
    <location>
        <position position="249"/>
    </location>
    <ligand>
        <name>substrate</name>
    </ligand>
</feature>
<feature type="site" description="Important for acyl-CoA specificity" evidence="1">
    <location>
        <position position="111"/>
    </location>
</feature>
<feature type="site" description="Important for substrate specificity" evidence="1">
    <location>
        <position position="192"/>
    </location>
</feature>
<evidence type="ECO:0000255" key="1">
    <source>
        <dbReference type="HAMAP-Rule" id="MF_00295"/>
    </source>
</evidence>